<name>FLAD_VIBAN</name>
<feature type="initiator methionine" description="Removed" evidence="2">
    <location>
        <position position="1"/>
    </location>
</feature>
<feature type="chain" id="PRO_0000182646" description="Flagellin D">
    <location>
        <begin position="2"/>
        <end position="377"/>
    </location>
</feature>
<feature type="coiled-coil region" evidence="1">
    <location>
        <begin position="104"/>
        <end position="128"/>
    </location>
</feature>
<evidence type="ECO:0000255" key="1"/>
<evidence type="ECO:0000269" key="2">
    <source>
    </source>
</evidence>
<evidence type="ECO:0000305" key="3"/>
<keyword id="KW-0975">Bacterial flagellum</keyword>
<keyword id="KW-0175">Coiled coil</keyword>
<keyword id="KW-0903">Direct protein sequencing</keyword>
<keyword id="KW-0964">Secreted</keyword>
<keyword id="KW-0843">Virulence</keyword>
<dbReference type="EMBL" id="U52198">
    <property type="protein sequence ID" value="AAB09434.1"/>
    <property type="molecule type" value="Genomic_DNA"/>
</dbReference>
<dbReference type="RefSeq" id="WP_013856299.1">
    <property type="nucleotide sequence ID" value="NZ_VTYO01000013.1"/>
</dbReference>
<dbReference type="SMR" id="Q56571"/>
<dbReference type="STRING" id="55601.AA407_04200"/>
<dbReference type="OMA" id="ADNTQFN"/>
<dbReference type="OrthoDB" id="9796789at2"/>
<dbReference type="GO" id="GO:0009288">
    <property type="term" value="C:bacterial-type flagellum"/>
    <property type="evidence" value="ECO:0007669"/>
    <property type="project" value="UniProtKB-SubCell"/>
</dbReference>
<dbReference type="GO" id="GO:0005576">
    <property type="term" value="C:extracellular region"/>
    <property type="evidence" value="ECO:0007669"/>
    <property type="project" value="UniProtKB-SubCell"/>
</dbReference>
<dbReference type="GO" id="GO:0005198">
    <property type="term" value="F:structural molecule activity"/>
    <property type="evidence" value="ECO:0007669"/>
    <property type="project" value="InterPro"/>
</dbReference>
<dbReference type="Gene3D" id="3.30.70.2120">
    <property type="match status" value="1"/>
</dbReference>
<dbReference type="Gene3D" id="1.20.1330.10">
    <property type="entry name" value="f41 fragment of flagellin, N-terminal domain"/>
    <property type="match status" value="1"/>
</dbReference>
<dbReference type="Gene3D" id="6.10.10.10">
    <property type="entry name" value="Flagellar export chaperone, C-terminal domain"/>
    <property type="match status" value="1"/>
</dbReference>
<dbReference type="InterPro" id="IPR001492">
    <property type="entry name" value="Flagellin"/>
</dbReference>
<dbReference type="InterPro" id="IPR046358">
    <property type="entry name" value="Flagellin_C"/>
</dbReference>
<dbReference type="InterPro" id="IPR042187">
    <property type="entry name" value="Flagellin_C_sub2"/>
</dbReference>
<dbReference type="InterPro" id="IPR010810">
    <property type="entry name" value="Flagellin_hook_IN_motif"/>
</dbReference>
<dbReference type="InterPro" id="IPR001029">
    <property type="entry name" value="Flagellin_N"/>
</dbReference>
<dbReference type="NCBIfam" id="NF006466">
    <property type="entry name" value="PRK08869.1-1"/>
    <property type="match status" value="1"/>
</dbReference>
<dbReference type="NCBIfam" id="NF006468">
    <property type="entry name" value="PRK08869.1-3"/>
    <property type="match status" value="1"/>
</dbReference>
<dbReference type="PANTHER" id="PTHR42792">
    <property type="entry name" value="FLAGELLIN"/>
    <property type="match status" value="1"/>
</dbReference>
<dbReference type="PANTHER" id="PTHR42792:SF2">
    <property type="entry name" value="FLAGELLIN"/>
    <property type="match status" value="1"/>
</dbReference>
<dbReference type="Pfam" id="PF00700">
    <property type="entry name" value="Flagellin_C"/>
    <property type="match status" value="1"/>
</dbReference>
<dbReference type="Pfam" id="PF07196">
    <property type="entry name" value="Flagellin_IN"/>
    <property type="match status" value="1"/>
</dbReference>
<dbReference type="Pfam" id="PF00669">
    <property type="entry name" value="Flagellin_N"/>
    <property type="match status" value="1"/>
</dbReference>
<dbReference type="PRINTS" id="PR00207">
    <property type="entry name" value="FLAGELLIN"/>
</dbReference>
<dbReference type="SUPFAM" id="SSF64518">
    <property type="entry name" value="Phase 1 flagellin"/>
    <property type="match status" value="1"/>
</dbReference>
<reference key="1">
    <citation type="journal article" date="1996" name="J. Bacteriol.">
        <title>Identification and characterization of additional flagellin genes from Vibrio anguillarum.</title>
        <authorList>
            <person name="McGee K."/>
            <person name="Hoerstedt P."/>
            <person name="Milton D.L."/>
        </authorList>
    </citation>
    <scope>NUCLEOTIDE SEQUENCE [GENOMIC DNA]</scope>
    <source>
        <strain>NB10 / Serotype O1</strain>
    </source>
</reference>
<reference key="2">
    <citation type="journal article" date="1996" name="J. Bacteriol.">
        <title>Flagellin A is essential for the virulence of Vibrio anguillarum.</title>
        <authorList>
            <person name="Milton D.L."/>
            <person name="O'Toole R."/>
            <person name="Hoerstedt P."/>
            <person name="Wolf-Watz H."/>
        </authorList>
    </citation>
    <scope>PROTEIN SEQUENCE OF 2-18</scope>
    <source>
        <strain>NB10 / Serotype O1</strain>
    </source>
</reference>
<gene>
    <name type="primary">flaD</name>
</gene>
<sequence length="377" mass="39641">MAVNVNTNVSAMTAQRYLNGASNAQQTSMERLSSGFKINSAKDDAAGLQISNRLNVQSRGLDVAVRNANDGISIAQTAEGAMNETTNILQRMRDLSLQSANGSNSKADRVAIQEEVTALNDELNRIAETTSFGGNKLLNGTFETKSFQIGADNGEAVMLSLNNMRSDNAMMGGTSYQAANGKDKDWSVQAGSNDLQITLKDTSGTDQTINISAKEGDDIEELATYINGQTDMVKASVDDEGKLQVFAGSNKVEGPVTFAGGLAGELGMQAGQAVTVDVIDVTSVGGAQESVAIVDAALQFVDSHRAQLGAFQNRFSHAISNLDNINENVSASKSRIKDTDFAKETTALTKSQILSQASSSVLAQAKQAPQAALSLLG</sequence>
<protein>
    <recommendedName>
        <fullName>Flagellin D</fullName>
    </recommendedName>
</protein>
<accession>Q56571</accession>
<proteinExistence type="evidence at protein level"/>
<comment type="function">
    <text>Flagellin is the subunit protein which polymerizes to form the filaments of bacterial flagella. FlaD is not essential for flagellar synthesis and motility. May have a role in virulence unrelated to motility.</text>
</comment>
<comment type="subunit">
    <text>Heteromer of multiple flagellin subunits including FlaA, FlaB, FlaC, FlaD and possibly FlaE.</text>
</comment>
<comment type="subcellular location">
    <subcellularLocation>
        <location>Secreted</location>
    </subcellularLocation>
    <subcellularLocation>
        <location>Bacterial flagellum</location>
    </subcellularLocation>
</comment>
<comment type="similarity">
    <text evidence="3">Belongs to the bacterial flagellin family.</text>
</comment>
<organism>
    <name type="scientific">Vibrio anguillarum</name>
    <name type="common">Listonella anguillarum</name>
    <dbReference type="NCBI Taxonomy" id="55601"/>
    <lineage>
        <taxon>Bacteria</taxon>
        <taxon>Pseudomonadati</taxon>
        <taxon>Pseudomonadota</taxon>
        <taxon>Gammaproteobacteria</taxon>
        <taxon>Vibrionales</taxon>
        <taxon>Vibrionaceae</taxon>
        <taxon>Vibrio</taxon>
    </lineage>
</organism>